<gene>
    <name evidence="1" type="primary">hemE</name>
    <name type="ordered locus">SF4069</name>
    <name type="ordered locus">S3666</name>
</gene>
<keyword id="KW-0002">3D-structure</keyword>
<keyword id="KW-0963">Cytoplasm</keyword>
<keyword id="KW-0210">Decarboxylase</keyword>
<keyword id="KW-0456">Lyase</keyword>
<keyword id="KW-0627">Porphyrin biosynthesis</keyword>
<keyword id="KW-1185">Reference proteome</keyword>
<comment type="function">
    <text evidence="1">Catalyzes the decarboxylation of four acetate groups of uroporphyrinogen-III to yield coproporphyrinogen-III.</text>
</comment>
<comment type="catalytic activity">
    <reaction evidence="1">
        <text>uroporphyrinogen III + 4 H(+) = coproporphyrinogen III + 4 CO2</text>
        <dbReference type="Rhea" id="RHEA:19865"/>
        <dbReference type="ChEBI" id="CHEBI:15378"/>
        <dbReference type="ChEBI" id="CHEBI:16526"/>
        <dbReference type="ChEBI" id="CHEBI:57308"/>
        <dbReference type="ChEBI" id="CHEBI:57309"/>
        <dbReference type="EC" id="4.1.1.37"/>
    </reaction>
</comment>
<comment type="pathway">
    <text evidence="1">Porphyrin-containing compound metabolism; protoporphyrin-IX biosynthesis; coproporphyrinogen-III from 5-aminolevulinate: step 4/4.</text>
</comment>
<comment type="subunit">
    <text evidence="1">Homodimer.</text>
</comment>
<comment type="subcellular location">
    <subcellularLocation>
        <location evidence="1">Cytoplasm</location>
    </subcellularLocation>
</comment>
<comment type="similarity">
    <text evidence="1">Belongs to the uroporphyrinogen decarboxylase family.</text>
</comment>
<sequence length="354" mass="39229">MTELKNDRYLRALLRQPVDVTPVWMMRQAGRYLPEYKATRAQAGDFMSLCKNAELACEVTLQPLRRYPLDAAILFSDILTVPDAMGLGLYFEAGEGPRFTSPVTCKADVDKLPIPDPEDELGYVMNAVRTIRHELKGEVPLIGFSGSPWTLATYMVEGGSSKAFTVIKKMMYADPQALHALLDKLAKSVTLYLNAQIKAGAQAVMIFDTWGGVLTGRDYQQFSLYYMHKIVDGLLRENDGRRVPVTLFTKGGGQWLEAMAETGCDALGLDWTTDIADARRRVGNKVALQGNMDPSMLYAPPARIEEEVATILAGFGHGEGHVFNLGHGIHQDVPPEHAGVFVEAVHRLSEQYHR</sequence>
<proteinExistence type="evidence at protein level"/>
<feature type="chain" id="PRO_0000187638" description="Uroporphyrinogen decarboxylase">
    <location>
        <begin position="1"/>
        <end position="354"/>
    </location>
</feature>
<feature type="binding site" evidence="1">
    <location>
        <begin position="27"/>
        <end position="31"/>
    </location>
    <ligand>
        <name>substrate</name>
    </ligand>
</feature>
<feature type="binding site" evidence="1">
    <location>
        <position position="46"/>
    </location>
    <ligand>
        <name>substrate</name>
    </ligand>
</feature>
<feature type="binding site" evidence="1">
    <location>
        <position position="77"/>
    </location>
    <ligand>
        <name>substrate</name>
    </ligand>
</feature>
<feature type="binding site" evidence="1">
    <location>
        <position position="154"/>
    </location>
    <ligand>
        <name>substrate</name>
    </ligand>
</feature>
<feature type="binding site" evidence="1">
    <location>
        <position position="209"/>
    </location>
    <ligand>
        <name>substrate</name>
    </ligand>
</feature>
<feature type="binding site" evidence="1">
    <location>
        <position position="327"/>
    </location>
    <ligand>
        <name>substrate</name>
    </ligand>
</feature>
<feature type="site" description="Transition state stabilizer" evidence="1">
    <location>
        <position position="77"/>
    </location>
</feature>
<feature type="helix" evidence="2">
    <location>
        <begin position="8"/>
        <end position="13"/>
    </location>
</feature>
<feature type="helix" evidence="2">
    <location>
        <begin position="34"/>
        <end position="43"/>
    </location>
</feature>
<feature type="helix" evidence="2">
    <location>
        <begin position="46"/>
        <end position="49"/>
    </location>
</feature>
<feature type="helix" evidence="2">
    <location>
        <begin position="53"/>
        <end position="61"/>
    </location>
</feature>
<feature type="helix" evidence="2">
    <location>
        <begin position="63"/>
        <end position="65"/>
    </location>
</feature>
<feature type="helix" evidence="2">
    <location>
        <begin position="80"/>
        <end position="83"/>
    </location>
</feature>
<feature type="turn" evidence="2">
    <location>
        <begin position="84"/>
        <end position="86"/>
    </location>
</feature>
<feature type="strand" evidence="2">
    <location>
        <begin position="89"/>
        <end position="91"/>
    </location>
</feature>
<feature type="strand" evidence="2">
    <location>
        <begin position="93"/>
        <end position="95"/>
    </location>
</feature>
<feature type="strand" evidence="2">
    <location>
        <begin position="97"/>
        <end position="101"/>
    </location>
</feature>
<feature type="helix" evidence="2">
    <location>
        <begin position="106"/>
        <end position="110"/>
    </location>
</feature>
<feature type="turn" evidence="2">
    <location>
        <begin position="117"/>
        <end position="121"/>
    </location>
</feature>
<feature type="helix" evidence="2">
    <location>
        <begin position="122"/>
        <end position="134"/>
    </location>
</feature>
<feature type="turn" evidence="2">
    <location>
        <begin position="135"/>
        <end position="137"/>
    </location>
</feature>
<feature type="strand" evidence="2">
    <location>
        <begin position="141"/>
        <end position="146"/>
    </location>
</feature>
<feature type="helix" evidence="2">
    <location>
        <begin position="148"/>
        <end position="157"/>
    </location>
</feature>
<feature type="helix" evidence="2">
    <location>
        <begin position="165"/>
        <end position="171"/>
    </location>
</feature>
<feature type="helix" evidence="2">
    <location>
        <begin position="175"/>
        <end position="198"/>
    </location>
</feature>
<feature type="strand" evidence="2">
    <location>
        <begin position="202"/>
        <end position="207"/>
    </location>
</feature>
<feature type="helix" evidence="2">
    <location>
        <begin position="211"/>
        <end position="213"/>
    </location>
</feature>
<feature type="helix" evidence="2">
    <location>
        <begin position="216"/>
        <end position="222"/>
    </location>
</feature>
<feature type="helix" evidence="2">
    <location>
        <begin position="224"/>
        <end position="233"/>
    </location>
</feature>
<feature type="strand" evidence="2">
    <location>
        <begin position="236"/>
        <end position="238"/>
    </location>
</feature>
<feature type="strand" evidence="2">
    <location>
        <begin position="245"/>
        <end position="248"/>
    </location>
</feature>
<feature type="helix" evidence="2">
    <location>
        <begin position="256"/>
        <end position="260"/>
    </location>
</feature>
<feature type="strand" evidence="2">
    <location>
        <begin position="265"/>
        <end position="268"/>
    </location>
</feature>
<feature type="helix" evidence="2">
    <location>
        <begin position="275"/>
        <end position="282"/>
    </location>
</feature>
<feature type="turn" evidence="2">
    <location>
        <begin position="283"/>
        <end position="285"/>
    </location>
</feature>
<feature type="strand" evidence="2">
    <location>
        <begin position="286"/>
        <end position="289"/>
    </location>
</feature>
<feature type="helix" evidence="2">
    <location>
        <begin position="294"/>
        <end position="298"/>
    </location>
</feature>
<feature type="helix" evidence="2">
    <location>
        <begin position="301"/>
        <end position="312"/>
    </location>
</feature>
<feature type="turn" evidence="2">
    <location>
        <begin position="313"/>
        <end position="317"/>
    </location>
</feature>
<feature type="strand" evidence="2">
    <location>
        <begin position="321"/>
        <end position="323"/>
    </location>
</feature>
<feature type="strand" evidence="2">
    <location>
        <begin position="325"/>
        <end position="327"/>
    </location>
</feature>
<feature type="helix" evidence="2">
    <location>
        <begin position="335"/>
        <end position="349"/>
    </location>
</feature>
<feature type="helix" evidence="2">
    <location>
        <begin position="350"/>
        <end position="353"/>
    </location>
</feature>
<evidence type="ECO:0000255" key="1">
    <source>
        <dbReference type="HAMAP-Rule" id="MF_00218"/>
    </source>
</evidence>
<evidence type="ECO:0007829" key="2">
    <source>
        <dbReference type="PDB" id="3CYV"/>
    </source>
</evidence>
<dbReference type="EC" id="4.1.1.37" evidence="1"/>
<dbReference type="EMBL" id="AE005674">
    <property type="protein sequence ID" value="AAN45498.1"/>
    <property type="molecule type" value="Genomic_DNA"/>
</dbReference>
<dbReference type="EMBL" id="AE014073">
    <property type="protein sequence ID" value="AAP18703.1"/>
    <property type="molecule type" value="Genomic_DNA"/>
</dbReference>
<dbReference type="RefSeq" id="NP_709791.1">
    <property type="nucleotide sequence ID" value="NC_004337.2"/>
</dbReference>
<dbReference type="RefSeq" id="WP_000137636.1">
    <property type="nucleotide sequence ID" value="NZ_WPGW01000040.1"/>
</dbReference>
<dbReference type="PDB" id="3CYV">
    <property type="method" value="X-ray"/>
    <property type="resolution" value="2.80 A"/>
    <property type="chains" value="A=1-354"/>
</dbReference>
<dbReference type="PDBsum" id="3CYV"/>
<dbReference type="SMR" id="Q83PB7"/>
<dbReference type="STRING" id="198214.SF4069"/>
<dbReference type="PaxDb" id="198214-SF4069"/>
<dbReference type="GeneID" id="1027590"/>
<dbReference type="KEGG" id="sfl:SF4069"/>
<dbReference type="KEGG" id="sfx:S3666"/>
<dbReference type="PATRIC" id="fig|198214.7.peg.4793"/>
<dbReference type="HOGENOM" id="CLU_040933_0_0_6"/>
<dbReference type="UniPathway" id="UPA00251">
    <property type="reaction ID" value="UER00321"/>
</dbReference>
<dbReference type="EvolutionaryTrace" id="Q83PB7"/>
<dbReference type="Proteomes" id="UP000001006">
    <property type="component" value="Chromosome"/>
</dbReference>
<dbReference type="Proteomes" id="UP000002673">
    <property type="component" value="Chromosome"/>
</dbReference>
<dbReference type="GO" id="GO:0005829">
    <property type="term" value="C:cytosol"/>
    <property type="evidence" value="ECO:0007669"/>
    <property type="project" value="TreeGrafter"/>
</dbReference>
<dbReference type="GO" id="GO:0004853">
    <property type="term" value="F:uroporphyrinogen decarboxylase activity"/>
    <property type="evidence" value="ECO:0007669"/>
    <property type="project" value="UniProtKB-UniRule"/>
</dbReference>
<dbReference type="GO" id="GO:0019353">
    <property type="term" value="P:protoporphyrinogen IX biosynthetic process from glutamate"/>
    <property type="evidence" value="ECO:0007669"/>
    <property type="project" value="TreeGrafter"/>
</dbReference>
<dbReference type="CDD" id="cd00717">
    <property type="entry name" value="URO-D"/>
    <property type="match status" value="1"/>
</dbReference>
<dbReference type="FunFam" id="3.20.20.210:FF:000001">
    <property type="entry name" value="Uroporphyrinogen decarboxylase"/>
    <property type="match status" value="1"/>
</dbReference>
<dbReference type="Gene3D" id="3.20.20.210">
    <property type="match status" value="1"/>
</dbReference>
<dbReference type="HAMAP" id="MF_00218">
    <property type="entry name" value="URO_D"/>
    <property type="match status" value="1"/>
</dbReference>
<dbReference type="InterPro" id="IPR038071">
    <property type="entry name" value="UROD/MetE-like_sf"/>
</dbReference>
<dbReference type="InterPro" id="IPR006361">
    <property type="entry name" value="Uroporphyrinogen_deCO2ase_HemE"/>
</dbReference>
<dbReference type="InterPro" id="IPR000257">
    <property type="entry name" value="Uroporphyrinogen_deCOase"/>
</dbReference>
<dbReference type="NCBIfam" id="TIGR01464">
    <property type="entry name" value="hemE"/>
    <property type="match status" value="1"/>
</dbReference>
<dbReference type="PANTHER" id="PTHR21091">
    <property type="entry name" value="METHYLTETRAHYDROFOLATE:HOMOCYSTEINE METHYLTRANSFERASE RELATED"/>
    <property type="match status" value="1"/>
</dbReference>
<dbReference type="PANTHER" id="PTHR21091:SF169">
    <property type="entry name" value="UROPORPHYRINOGEN DECARBOXYLASE"/>
    <property type="match status" value="1"/>
</dbReference>
<dbReference type="Pfam" id="PF01208">
    <property type="entry name" value="URO-D"/>
    <property type="match status" value="1"/>
</dbReference>
<dbReference type="SUPFAM" id="SSF51726">
    <property type="entry name" value="UROD/MetE-like"/>
    <property type="match status" value="1"/>
</dbReference>
<dbReference type="PROSITE" id="PS00906">
    <property type="entry name" value="UROD_1"/>
    <property type="match status" value="1"/>
</dbReference>
<dbReference type="PROSITE" id="PS00907">
    <property type="entry name" value="UROD_2"/>
    <property type="match status" value="1"/>
</dbReference>
<protein>
    <recommendedName>
        <fullName evidence="1">Uroporphyrinogen decarboxylase</fullName>
        <shortName evidence="1">UPD</shortName>
        <shortName evidence="1">URO-D</shortName>
        <ecNumber evidence="1">4.1.1.37</ecNumber>
    </recommendedName>
</protein>
<accession>Q83PB7</accession>
<name>DCUP_SHIFL</name>
<reference key="1">
    <citation type="journal article" date="2002" name="Nucleic Acids Res.">
        <title>Genome sequence of Shigella flexneri 2a: insights into pathogenicity through comparison with genomes of Escherichia coli K12 and O157.</title>
        <authorList>
            <person name="Jin Q."/>
            <person name="Yuan Z."/>
            <person name="Xu J."/>
            <person name="Wang Y."/>
            <person name="Shen Y."/>
            <person name="Lu W."/>
            <person name="Wang J."/>
            <person name="Liu H."/>
            <person name="Yang J."/>
            <person name="Yang F."/>
            <person name="Zhang X."/>
            <person name="Zhang J."/>
            <person name="Yang G."/>
            <person name="Wu H."/>
            <person name="Qu D."/>
            <person name="Dong J."/>
            <person name="Sun L."/>
            <person name="Xue Y."/>
            <person name="Zhao A."/>
            <person name="Gao Y."/>
            <person name="Zhu J."/>
            <person name="Kan B."/>
            <person name="Ding K."/>
            <person name="Chen S."/>
            <person name="Cheng H."/>
            <person name="Yao Z."/>
            <person name="He B."/>
            <person name="Chen R."/>
            <person name="Ma D."/>
            <person name="Qiang B."/>
            <person name="Wen Y."/>
            <person name="Hou Y."/>
            <person name="Yu J."/>
        </authorList>
    </citation>
    <scope>NUCLEOTIDE SEQUENCE [LARGE SCALE GENOMIC DNA]</scope>
    <source>
        <strain>301 / Serotype 2a</strain>
    </source>
</reference>
<reference key="2">
    <citation type="journal article" date="2003" name="Infect. Immun.">
        <title>Complete genome sequence and comparative genomics of Shigella flexneri serotype 2a strain 2457T.</title>
        <authorList>
            <person name="Wei J."/>
            <person name="Goldberg M.B."/>
            <person name="Burland V."/>
            <person name="Venkatesan M.M."/>
            <person name="Deng W."/>
            <person name="Fournier G."/>
            <person name="Mayhew G.F."/>
            <person name="Plunkett G. III"/>
            <person name="Rose D.J."/>
            <person name="Darling A."/>
            <person name="Mau B."/>
            <person name="Perna N.T."/>
            <person name="Payne S.M."/>
            <person name="Runyen-Janecky L.J."/>
            <person name="Zhou S."/>
            <person name="Schwartz D.C."/>
            <person name="Blattner F.R."/>
        </authorList>
    </citation>
    <scope>NUCLEOTIDE SEQUENCE [LARGE SCALE GENOMIC DNA]</scope>
    <source>
        <strain>ATCC 700930 / 2457T / Serotype 2a</strain>
    </source>
</reference>
<organism>
    <name type="scientific">Shigella flexneri</name>
    <dbReference type="NCBI Taxonomy" id="623"/>
    <lineage>
        <taxon>Bacteria</taxon>
        <taxon>Pseudomonadati</taxon>
        <taxon>Pseudomonadota</taxon>
        <taxon>Gammaproteobacteria</taxon>
        <taxon>Enterobacterales</taxon>
        <taxon>Enterobacteriaceae</taxon>
        <taxon>Shigella</taxon>
    </lineage>
</organism>